<keyword id="KW-0002">3D-structure</keyword>
<keyword id="KW-0004">4Fe-4S</keyword>
<keyword id="KW-0963">Cytoplasm</keyword>
<keyword id="KW-0408">Iron</keyword>
<keyword id="KW-0411">Iron-sulfur</keyword>
<keyword id="KW-0456">Lyase</keyword>
<keyword id="KW-0479">Metal-binding</keyword>
<keyword id="KW-1185">Reference proteome</keyword>
<keyword id="KW-0949">S-adenosyl-L-methionine</keyword>
<keyword id="KW-0819">tRNA processing</keyword>
<evidence type="ECO:0000255" key="1">
    <source>
        <dbReference type="HAMAP-Rule" id="MF_01921"/>
    </source>
</evidence>
<evidence type="ECO:0000255" key="2">
    <source>
        <dbReference type="PROSITE-ProRule" id="PRU01266"/>
    </source>
</evidence>
<evidence type="ECO:0000269" key="3">
    <source>
    </source>
</evidence>
<evidence type="ECO:0000269" key="4">
    <source>
    </source>
</evidence>
<evidence type="ECO:0000305" key="5"/>
<evidence type="ECO:0000305" key="6">
    <source>
    </source>
</evidence>
<evidence type="ECO:0007829" key="7">
    <source>
        <dbReference type="PDB" id="6DJT"/>
    </source>
</evidence>
<sequence length="311" mass="36712">MIPEEIYKILRKQRYQIDGHTAVKLCGWVRKKMLEDKNCYKSKFYGIETHRCIQCTPSVIWCQQNCIFCWRVLPRDIGIDISQIKEPKWEEPEVVYEKILAMHKRIIMGYAGVLDRVGEKKFKEALEPKHVAISLSGEPTLYPYLDELIKIFHKNGFTTFVVSNGILTDVIEKIEPTQLYISLDAYDLDSYRRICGGKKEYWESILNTLDILKEKKRTCIRTTLIRGYNDDILKFVELYERADVHFIELKSYMHVGYSQKRLKKEDMLQHDEILKLAKMLDENSSYKLIDDSEDSRVALLQNENRKINPKL</sequence>
<organism>
    <name type="scientific">Methanocaldococcus jannaschii (strain ATCC 43067 / DSM 2661 / JAL-1 / JCM 10045 / NBRC 100440)</name>
    <name type="common">Methanococcus jannaschii</name>
    <dbReference type="NCBI Taxonomy" id="243232"/>
    <lineage>
        <taxon>Archaea</taxon>
        <taxon>Methanobacteriati</taxon>
        <taxon>Methanobacteriota</taxon>
        <taxon>Methanomada group</taxon>
        <taxon>Methanococci</taxon>
        <taxon>Methanococcales</taxon>
        <taxon>Methanocaldococcaceae</taxon>
        <taxon>Methanocaldococcus</taxon>
    </lineage>
</organism>
<comment type="function">
    <text evidence="1 4">Component of the wyosine derivatives biosynthesis pathway that catalyzes the condensation of N-methylguanine with 2 carbon atoms from pyruvate to form the tricyclic 4-demethylwyosine (imG-14) on guanosine-37 of tRNA(Phe).</text>
</comment>
<comment type="catalytic activity">
    <reaction evidence="1 4">
        <text>N(1)-methylguanosine(37) in tRNA(Phe) + pyruvate + S-adenosyl-L-methionine = 4-demethylwyosine(37) in tRNA(Phe) + 5'-deoxyadenosine + L-methionine + CO2 + H2O</text>
        <dbReference type="Rhea" id="RHEA:36347"/>
        <dbReference type="Rhea" id="RHEA-COMP:10164"/>
        <dbReference type="Rhea" id="RHEA-COMP:10165"/>
        <dbReference type="ChEBI" id="CHEBI:15361"/>
        <dbReference type="ChEBI" id="CHEBI:15377"/>
        <dbReference type="ChEBI" id="CHEBI:16526"/>
        <dbReference type="ChEBI" id="CHEBI:17319"/>
        <dbReference type="ChEBI" id="CHEBI:57844"/>
        <dbReference type="ChEBI" id="CHEBI:59789"/>
        <dbReference type="ChEBI" id="CHEBI:64315"/>
        <dbReference type="ChEBI" id="CHEBI:73542"/>
        <dbReference type="EC" id="4.1.3.44"/>
    </reaction>
</comment>
<comment type="cofactor">
    <cofactor evidence="6">
        <name>[4Fe-4S] cluster</name>
        <dbReference type="ChEBI" id="CHEBI:49883"/>
    </cofactor>
    <text evidence="6">Binds 2 [4Fe-4S] clusters. Binds 1 [4Fe-4S] cluster coordinated with 3 cysteines and an exchangeable S-adenosyl-L-methionine.</text>
</comment>
<comment type="subunit">
    <text evidence="1 3">Monomer.</text>
</comment>
<comment type="subcellular location">
    <subcellularLocation>
        <location evidence="1">Cytoplasm</location>
    </subcellularLocation>
</comment>
<comment type="similarity">
    <text evidence="1">Belongs to the TYW1 family.</text>
</comment>
<protein>
    <recommendedName>
        <fullName evidence="1">S-adenosyl-L-methionine-dependent tRNA 4-demethylwyosine synthase</fullName>
        <ecNumber evidence="1">4.1.3.44</ecNumber>
    </recommendedName>
    <alternativeName>
        <fullName>MjTYW1</fullName>
    </alternativeName>
    <alternativeName>
        <fullName evidence="1">tRNA wyosine derivatives biosynthesis protein Taw1</fullName>
    </alternativeName>
</protein>
<gene>
    <name evidence="1" type="primary">taw1</name>
    <name type="ordered locus">MJ0257</name>
</gene>
<name>TYW1_METJA</name>
<dbReference type="EC" id="4.1.3.44" evidence="1"/>
<dbReference type="EMBL" id="L77117">
    <property type="protein sequence ID" value="AAB98244.1"/>
    <property type="molecule type" value="Genomic_DNA"/>
</dbReference>
<dbReference type="PIR" id="B64332">
    <property type="entry name" value="B64332"/>
</dbReference>
<dbReference type="RefSeq" id="WP_010869754.1">
    <property type="nucleotide sequence ID" value="NC_000909.1"/>
</dbReference>
<dbReference type="PDB" id="2Z2U">
    <property type="method" value="X-ray"/>
    <property type="resolution" value="2.40 A"/>
    <property type="chains" value="A=1-311"/>
</dbReference>
<dbReference type="PDB" id="6DJT">
    <property type="method" value="X-ray"/>
    <property type="resolution" value="1.64 A"/>
    <property type="chains" value="A=1-311"/>
</dbReference>
<dbReference type="PDBsum" id="2Z2U"/>
<dbReference type="PDBsum" id="6DJT"/>
<dbReference type="SMR" id="Q57705"/>
<dbReference type="STRING" id="243232.MJ_0257"/>
<dbReference type="PaxDb" id="243232-MJ_0257"/>
<dbReference type="EnsemblBacteria" id="AAB98244">
    <property type="protein sequence ID" value="AAB98244"/>
    <property type="gene ID" value="MJ_0257"/>
</dbReference>
<dbReference type="GeneID" id="1451111"/>
<dbReference type="KEGG" id="mja:MJ_0257"/>
<dbReference type="eggNOG" id="arCOG04174">
    <property type="taxonomic scope" value="Archaea"/>
</dbReference>
<dbReference type="HOGENOM" id="CLU_007952_3_0_2"/>
<dbReference type="InParanoid" id="Q57705"/>
<dbReference type="OrthoDB" id="68499at2157"/>
<dbReference type="PhylomeDB" id="Q57705"/>
<dbReference type="BRENDA" id="4.1.3.44">
    <property type="organism ID" value="3260"/>
</dbReference>
<dbReference type="EvolutionaryTrace" id="Q57705"/>
<dbReference type="Proteomes" id="UP000000805">
    <property type="component" value="Chromosome"/>
</dbReference>
<dbReference type="GO" id="GO:0005737">
    <property type="term" value="C:cytoplasm"/>
    <property type="evidence" value="ECO:0007669"/>
    <property type="project" value="UniProtKB-SubCell"/>
</dbReference>
<dbReference type="GO" id="GO:0051539">
    <property type="term" value="F:4 iron, 4 sulfur cluster binding"/>
    <property type="evidence" value="ECO:0007669"/>
    <property type="project" value="UniProtKB-UniRule"/>
</dbReference>
<dbReference type="GO" id="GO:0046872">
    <property type="term" value="F:metal ion binding"/>
    <property type="evidence" value="ECO:0007669"/>
    <property type="project" value="UniProtKB-KW"/>
</dbReference>
<dbReference type="GO" id="GO:0102521">
    <property type="term" value="F:tRNA-4-demethylwyosine synthase activity"/>
    <property type="evidence" value="ECO:0007669"/>
    <property type="project" value="UniProtKB-EC"/>
</dbReference>
<dbReference type="GO" id="GO:0008033">
    <property type="term" value="P:tRNA processing"/>
    <property type="evidence" value="ECO:0007669"/>
    <property type="project" value="UniProtKB-UniRule"/>
</dbReference>
<dbReference type="CDD" id="cd01335">
    <property type="entry name" value="Radical_SAM"/>
    <property type="match status" value="1"/>
</dbReference>
<dbReference type="Gene3D" id="3.20.20.70">
    <property type="entry name" value="Aldolase class I"/>
    <property type="match status" value="1"/>
</dbReference>
<dbReference type="HAMAP" id="MF_01921">
    <property type="entry name" value="TYW1_archaea"/>
    <property type="match status" value="1"/>
</dbReference>
<dbReference type="InterPro" id="IPR013785">
    <property type="entry name" value="Aldolase_TIM"/>
</dbReference>
<dbReference type="InterPro" id="IPR007197">
    <property type="entry name" value="rSAM"/>
</dbReference>
<dbReference type="InterPro" id="IPR013917">
    <property type="entry name" value="tRNA_wybutosine-synth"/>
</dbReference>
<dbReference type="InterPro" id="IPR034556">
    <property type="entry name" value="tRNA_wybutosine-synthase"/>
</dbReference>
<dbReference type="InterPro" id="IPR023993">
    <property type="entry name" value="TYW1_archaea"/>
</dbReference>
<dbReference type="NCBIfam" id="TIGR03972">
    <property type="entry name" value="rSAM_TYW1"/>
    <property type="match status" value="1"/>
</dbReference>
<dbReference type="PANTHER" id="PTHR13930">
    <property type="entry name" value="S-ADENOSYL-L-METHIONINE-DEPENDENT TRNA 4-DEMETHYLWYOSINE SYNTHASE"/>
    <property type="match status" value="1"/>
</dbReference>
<dbReference type="PANTHER" id="PTHR13930:SF0">
    <property type="entry name" value="S-ADENOSYL-L-METHIONINE-DEPENDENT TRNA 4-DEMETHYLWYOSINE SYNTHASE TYW1-RELATED"/>
    <property type="match status" value="1"/>
</dbReference>
<dbReference type="Pfam" id="PF04055">
    <property type="entry name" value="Radical_SAM"/>
    <property type="match status" value="1"/>
</dbReference>
<dbReference type="Pfam" id="PF08608">
    <property type="entry name" value="Wyosine_form"/>
    <property type="match status" value="1"/>
</dbReference>
<dbReference type="SFLD" id="SFLDS00029">
    <property type="entry name" value="Radical_SAM"/>
    <property type="match status" value="1"/>
</dbReference>
<dbReference type="SFLD" id="SFLDF00284">
    <property type="entry name" value="tRNA_wybutosine-synthesizing"/>
    <property type="match status" value="1"/>
</dbReference>
<dbReference type="SUPFAM" id="SSF102114">
    <property type="entry name" value="Radical SAM enzymes"/>
    <property type="match status" value="1"/>
</dbReference>
<dbReference type="PROSITE" id="PS51918">
    <property type="entry name" value="RADICAL_SAM"/>
    <property type="match status" value="1"/>
</dbReference>
<feature type="chain" id="PRO_0000217862" description="S-adenosyl-L-methionine-dependent tRNA 4-demethylwyosine synthase">
    <location>
        <begin position="1"/>
        <end position="311"/>
    </location>
</feature>
<feature type="domain" description="Radical SAM core" evidence="2">
    <location>
        <begin position="45"/>
        <end position="283"/>
    </location>
</feature>
<feature type="binding site" evidence="5">
    <location>
        <position position="26"/>
    </location>
    <ligand>
        <name>[4Fe-4S] cluster</name>
        <dbReference type="ChEBI" id="CHEBI:49883"/>
        <label>1</label>
    </ligand>
</feature>
<feature type="binding site" evidence="5">
    <location>
        <position position="39"/>
    </location>
    <ligand>
        <name>[4Fe-4S] cluster</name>
        <dbReference type="ChEBI" id="CHEBI:49883"/>
        <label>1</label>
    </ligand>
</feature>
<feature type="binding site" evidence="5">
    <location>
        <position position="52"/>
    </location>
    <ligand>
        <name>[4Fe-4S] cluster</name>
        <dbReference type="ChEBI" id="CHEBI:49883"/>
        <label>1</label>
    </ligand>
</feature>
<feature type="binding site" evidence="5">
    <location>
        <position position="62"/>
    </location>
    <ligand>
        <name>[4Fe-4S] cluster</name>
        <dbReference type="ChEBI" id="CHEBI:49883"/>
        <label>2</label>
        <note>4Fe-4S-S-AdoMet</note>
    </ligand>
</feature>
<feature type="binding site" evidence="5">
    <location>
        <position position="66"/>
    </location>
    <ligand>
        <name>[4Fe-4S] cluster</name>
        <dbReference type="ChEBI" id="CHEBI:49883"/>
        <label>2</label>
        <note>4Fe-4S-S-AdoMet</note>
    </ligand>
</feature>
<feature type="binding site" evidence="5">
    <location>
        <position position="69"/>
    </location>
    <ligand>
        <name>[4Fe-4S] cluster</name>
        <dbReference type="ChEBI" id="CHEBI:49883"/>
        <label>2</label>
        <note>4Fe-4S-S-AdoMet</note>
    </ligand>
</feature>
<feature type="helix" evidence="7">
    <location>
        <begin position="4"/>
        <end position="12"/>
    </location>
</feature>
<feature type="strand" evidence="7">
    <location>
        <begin position="16"/>
        <end position="18"/>
    </location>
</feature>
<feature type="strand" evidence="7">
    <location>
        <begin position="21"/>
        <end position="23"/>
    </location>
</feature>
<feature type="helix" evidence="7">
    <location>
        <begin position="27"/>
        <end position="35"/>
    </location>
</feature>
<feature type="helix" evidence="7">
    <location>
        <begin position="40"/>
        <end position="45"/>
    </location>
</feature>
<feature type="helix" evidence="7">
    <location>
        <begin position="49"/>
        <end position="51"/>
    </location>
</feature>
<feature type="strand" evidence="7">
    <location>
        <begin position="52"/>
        <end position="58"/>
    </location>
</feature>
<feature type="helix" evidence="7">
    <location>
        <begin position="92"/>
        <end position="108"/>
    </location>
</feature>
<feature type="helix" evidence="7">
    <location>
        <begin position="109"/>
        <end position="113"/>
    </location>
</feature>
<feature type="helix" evidence="7">
    <location>
        <begin position="114"/>
        <end position="117"/>
    </location>
</feature>
<feature type="helix" evidence="7">
    <location>
        <begin position="119"/>
        <end position="125"/>
    </location>
</feature>
<feature type="strand" evidence="7">
    <location>
        <begin position="130"/>
        <end position="133"/>
    </location>
</feature>
<feature type="strand" evidence="7">
    <location>
        <begin position="135"/>
        <end position="137"/>
    </location>
</feature>
<feature type="helix" evidence="7">
    <location>
        <begin position="139"/>
        <end position="141"/>
    </location>
</feature>
<feature type="helix" evidence="7">
    <location>
        <begin position="145"/>
        <end position="154"/>
    </location>
</feature>
<feature type="strand" evidence="7">
    <location>
        <begin position="158"/>
        <end position="163"/>
    </location>
</feature>
<feature type="helix" evidence="7">
    <location>
        <begin position="168"/>
        <end position="173"/>
    </location>
</feature>
<feature type="strand" evidence="7">
    <location>
        <begin position="177"/>
        <end position="182"/>
    </location>
</feature>
<feature type="helix" evidence="7">
    <location>
        <begin position="188"/>
        <end position="195"/>
    </location>
</feature>
<feature type="helix" evidence="7">
    <location>
        <begin position="199"/>
        <end position="211"/>
    </location>
</feature>
<feature type="helix" evidence="7">
    <location>
        <begin position="212"/>
        <end position="214"/>
    </location>
</feature>
<feature type="strand" evidence="7">
    <location>
        <begin position="215"/>
        <end position="224"/>
    </location>
</feature>
<feature type="turn" evidence="7">
    <location>
        <begin position="226"/>
        <end position="228"/>
    </location>
</feature>
<feature type="helix" evidence="7">
    <location>
        <begin position="232"/>
        <end position="235"/>
    </location>
</feature>
<feature type="helix" evidence="7">
    <location>
        <begin position="236"/>
        <end position="242"/>
    </location>
</feature>
<feature type="strand" evidence="7">
    <location>
        <begin position="245"/>
        <end position="251"/>
    </location>
</feature>
<feature type="helix" evidence="7">
    <location>
        <begin position="264"/>
        <end position="266"/>
    </location>
</feature>
<feature type="helix" evidence="7">
    <location>
        <begin position="270"/>
        <end position="282"/>
    </location>
</feature>
<feature type="strand" evidence="7">
    <location>
        <begin position="284"/>
        <end position="292"/>
    </location>
</feature>
<feature type="helix" evidence="7">
    <location>
        <begin position="293"/>
        <end position="295"/>
    </location>
</feature>
<feature type="strand" evidence="7">
    <location>
        <begin position="297"/>
        <end position="302"/>
    </location>
</feature>
<proteinExistence type="evidence at protein level"/>
<accession>Q57705</accession>
<reference key="1">
    <citation type="journal article" date="1996" name="Science">
        <title>Complete genome sequence of the methanogenic archaeon, Methanococcus jannaschii.</title>
        <authorList>
            <person name="Bult C.J."/>
            <person name="White O."/>
            <person name="Olsen G.J."/>
            <person name="Zhou L."/>
            <person name="Fleischmann R.D."/>
            <person name="Sutton G.G."/>
            <person name="Blake J.A."/>
            <person name="FitzGerald L.M."/>
            <person name="Clayton R.A."/>
            <person name="Gocayne J.D."/>
            <person name="Kerlavage A.R."/>
            <person name="Dougherty B.A."/>
            <person name="Tomb J.-F."/>
            <person name="Adams M.D."/>
            <person name="Reich C.I."/>
            <person name="Overbeek R."/>
            <person name="Kirkness E.F."/>
            <person name="Weinstock K.G."/>
            <person name="Merrick J.M."/>
            <person name="Glodek A."/>
            <person name="Scott J.L."/>
            <person name="Geoghagen N.S.M."/>
            <person name="Weidman J.F."/>
            <person name="Fuhrmann J.L."/>
            <person name="Nguyen D."/>
            <person name="Utterback T.R."/>
            <person name="Kelley J.M."/>
            <person name="Peterson J.D."/>
            <person name="Sadow P.W."/>
            <person name="Hanna M.C."/>
            <person name="Cotton M.D."/>
            <person name="Roberts K.M."/>
            <person name="Hurst M.A."/>
            <person name="Kaine B.P."/>
            <person name="Borodovsky M."/>
            <person name="Klenk H.-P."/>
            <person name="Fraser C.M."/>
            <person name="Smith H.O."/>
            <person name="Woese C.R."/>
            <person name="Venter J.C."/>
        </authorList>
    </citation>
    <scope>NUCLEOTIDE SEQUENCE [LARGE SCALE GENOMIC DNA]</scope>
    <source>
        <strain>ATCC 43067 / DSM 2661 / JAL-1 / JCM 10045 / NBRC 100440</strain>
    </source>
</reference>
<reference key="2">
    <citation type="journal article" date="2010" name="Mol. Biol. Evol.">
        <title>Biosynthesis of wyosine derivatives in tRNA: an ancient and highly diverse pathway in Archaea.</title>
        <authorList>
            <person name="de Crecy-Lagard V."/>
            <person name="Brochier-Armanet C."/>
            <person name="Urbonavicius J."/>
            <person name="Fernandez B."/>
            <person name="Phillips G."/>
            <person name="Lyons B."/>
            <person name="Noma A."/>
            <person name="Alvarez S."/>
            <person name="Droogmans L."/>
            <person name="Armengaud J."/>
            <person name="Grosjean H."/>
        </authorList>
    </citation>
    <scope>GENE NAME</scope>
</reference>
<reference key="3">
    <citation type="journal article" date="2011" name="Biochemistry">
        <title>Pyruvate is the source of the two carbons that are required for formation of the imidazoline ring of 4-demethylwyosine.</title>
        <authorList>
            <person name="Young A.P."/>
            <person name="Bandarian V."/>
        </authorList>
    </citation>
    <scope>CATALYTIC ACTIVITY</scope>
    <scope>FUNCTION</scope>
</reference>
<reference key="4">
    <citation type="journal article" date="2007" name="J. Mol. Biol.">
        <title>Crystal structure of the radical SAM enzyme catalyzing tricyclic modified base formation in tRNA.</title>
        <authorList>
            <person name="Suzuki Y."/>
            <person name="Noma A."/>
            <person name="Suzuki T."/>
            <person name="Senda M."/>
            <person name="Senda T."/>
            <person name="Ishitani R."/>
            <person name="Nureki O."/>
        </authorList>
    </citation>
    <scope>X-RAY CRYSTALLOGRAPHY (2.4 ANGSTROMS)</scope>
    <scope>COFACTOR</scope>
    <scope>SUBUNIT</scope>
</reference>